<accession>P76063</accession>
<accession>Q2MBE4</accession>
<proteinExistence type="evidence at transcript level"/>
<keyword id="KW-1185">Reference proteome</keyword>
<keyword id="KW-0804">Transcription</keyword>
<keyword id="KW-0805">Transcription regulation</keyword>
<evidence type="ECO:0000269" key="1">
    <source>
    </source>
</evidence>
<evidence type="ECO:0000269" key="2">
    <source>
    </source>
</evidence>
<evidence type="ECO:0000269" key="3">
    <source>
    </source>
</evidence>
<evidence type="ECO:0000269" key="4">
    <source>
    </source>
</evidence>
<evidence type="ECO:0000269" key="5">
    <source>
    </source>
</evidence>
<evidence type="ECO:0000269" key="6">
    <source>
    </source>
</evidence>
<evidence type="ECO:0000305" key="7"/>
<feature type="chain" id="PRO_0000013832" description="Putative transcriptional regulator YdaS">
    <location>
        <begin position="1"/>
        <end position="98"/>
    </location>
</feature>
<sequence length="98" mass="10976">MKKENYSFKQACAVVGGQSAMARLLGVSPPSVNQWIKGVRQLPAERCPAIERATRGEVLCEELRPDIDWSYLRRSACCSQNMSVKQLNDSNKSSFDHT</sequence>
<reference key="1">
    <citation type="journal article" date="1997" name="Science">
        <title>The complete genome sequence of Escherichia coli K-12.</title>
        <authorList>
            <person name="Blattner F.R."/>
            <person name="Plunkett G. III"/>
            <person name="Bloch C.A."/>
            <person name="Perna N.T."/>
            <person name="Burland V."/>
            <person name="Riley M."/>
            <person name="Collado-Vides J."/>
            <person name="Glasner J.D."/>
            <person name="Rode C.K."/>
            <person name="Mayhew G.F."/>
            <person name="Gregor J."/>
            <person name="Davis N.W."/>
            <person name="Kirkpatrick H.A."/>
            <person name="Goeden M.A."/>
            <person name="Rose D.J."/>
            <person name="Mau B."/>
            <person name="Shao Y."/>
        </authorList>
    </citation>
    <scope>NUCLEOTIDE SEQUENCE [LARGE SCALE GENOMIC DNA]</scope>
    <source>
        <strain>K12 / MG1655 / ATCC 47076</strain>
    </source>
</reference>
<reference key="2">
    <citation type="journal article" date="2006" name="Mol. Syst. Biol.">
        <title>Highly accurate genome sequences of Escherichia coli K-12 strains MG1655 and W3110.</title>
        <authorList>
            <person name="Hayashi K."/>
            <person name="Morooka N."/>
            <person name="Yamamoto Y."/>
            <person name="Fujita K."/>
            <person name="Isono K."/>
            <person name="Choi S."/>
            <person name="Ohtsubo E."/>
            <person name="Baba T."/>
            <person name="Wanner B.L."/>
            <person name="Mori H."/>
            <person name="Horiuchi T."/>
        </authorList>
    </citation>
    <scope>NUCLEOTIDE SEQUENCE [LARGE SCALE GENOMIC DNA]</scope>
    <source>
        <strain>K12 / W3110 / ATCC 27325 / DSM 5911</strain>
    </source>
</reference>
<reference key="3">
    <citation type="journal article" date="2010" name="Mol. Microbiol.">
        <title>Three new RelE-homologous mRNA interferases of Escherichia coli differentially induced by environmental stresses.</title>
        <authorList>
            <person name="Christensen-Dalsgaard M."/>
            <person name="Jorgensen M.G."/>
            <person name="Gerdes K."/>
        </authorList>
    </citation>
    <scope>SHOWS THAT IT IS PROBABLY NOT A TOXIN/ANTITOXIN SYSTEM</scope>
</reference>
<reference key="4">
    <citation type="journal article" date="2017" name="MSphere">
        <title>Repression of YdaS Toxin Is Mediated by Transcriptional Repressor RacR in the Cryptic rac Prophage of Escherichia coli K-12.</title>
        <authorList>
            <person name="Krishnamurthi R."/>
            <person name="Ghosh S."/>
            <person name="Khedkar S."/>
            <person name="Seshasayee A.S.N."/>
        </authorList>
    </citation>
    <scope>OVEREXPRESSION</scope>
    <scope>TRANSCRIPTIONAL REGULATION</scope>
    <source>
        <strain>K12 / MG1655 / ATCC 47076</strain>
    </source>
</reference>
<reference key="5">
    <citation type="journal article" date="2017" name="MSphere">
        <title>CRISPR-Cas-Mediated Gene Silencing Reveals RacR To Be a Negative Regulator of YdaS and YdaT Toxins in Escherichia coli K-12.</title>
        <authorList>
            <person name="Bindal G."/>
            <person name="Krishnamurthi R."/>
            <person name="Seshasayee A.S.N."/>
            <person name="Rath D."/>
        </authorList>
    </citation>
    <scope>FUNCTION</scope>
    <scope>TRANSCRIPTIONAL REGULATION</scope>
    <scope>DISRUPTION PHENOTYPE</scope>
    <source>
        <strain>K12</strain>
    </source>
</reference>
<reference key="6">
    <citation type="journal article" date="2018" name="MSphere">
        <title>Ectopic Expression of the ydaS and ydaT Genes of the Cryptic Prophage Rac of Escherichia coli K-12 May Be Toxic but Do They Really Encode Toxins?: a Case for Using Genetic Context To Understand Function.</title>
        <authorList>
            <person name="Jobling M.G."/>
        </authorList>
    </citation>
    <scope>DISCUSSION OF FUNCTION</scope>
</reference>
<reference key="7">
    <citation type="journal article" date="2018" name="MSphere">
        <title>Reply to Jobling, 'Ectopic Expression of the ydaS and ydaT Genes of the Cryptic Prophage Rac of Escherichia coli K-12 May Be Toxic but Do They Really Encode Toxins?: a Case for Using Genetic Context To Understand Function'.</title>
        <authorList>
            <person name="Seshasayee A.S.N."/>
        </authorList>
    </citation>
    <scope>DISCUSSION OF FUNCTION</scope>
</reference>
<reference key="8">
    <citation type="journal article" date="2024" name="Nucleic Acids Res.">
        <title>Lethal perturbation of an Escherichia coli regulatory network is triggered by a restriction-modification system's regulator and can be mitigated by excision of the cryptic prophage Rac.</title>
        <authorList>
            <person name="Gucwa K."/>
            <person name="Wons E."/>
            <person name="Wisniewska A."/>
            <person name="Jakalski M."/>
            <person name="Dubiak Z."/>
            <person name="Kozlowski L.P."/>
            <person name="Mruk I."/>
        </authorList>
    </citation>
    <scope>FUNCTION</scope>
    <source>
        <strain>K12 / MG1655 / ATCC 47076</strain>
    </source>
</reference>
<organism>
    <name type="scientific">Escherichia coli (strain K12)</name>
    <dbReference type="NCBI Taxonomy" id="83333"/>
    <lineage>
        <taxon>Bacteria</taxon>
        <taxon>Pseudomonadati</taxon>
        <taxon>Pseudomonadota</taxon>
        <taxon>Gammaproteobacteria</taxon>
        <taxon>Enterobacterales</taxon>
        <taxon>Enterobacteriaceae</taxon>
        <taxon>Escherichia</taxon>
    </lineage>
</organism>
<protein>
    <recommendedName>
        <fullName evidence="7">Putative transcriptional regulator YdaS</fullName>
    </recommendedName>
</protein>
<gene>
    <name type="primary">ydaS</name>
    <name type="ordered locus">b1357</name>
    <name type="ordered locus">JW1352</name>
</gene>
<comment type="function">
    <text evidence="2 3 6">When overexpressed, it induces Rac prophage excision, possibly to counteract the lethal toxicity of YdaT (PubMed:38153127). Overexpression of ydaS or ydaST reduces growth and leads to loss of cell viability (PubMed:29205228). May contribute to toxicity and morphological defects (PubMed:29205229).</text>
</comment>
<comment type="induction">
    <text evidence="2 3">Not expressed under normal physiological conditions (PubMed:29205228). Expression is repressed by the transcriptional repressor RacR (PubMed:29205228, PubMed:29205229).</text>
</comment>
<comment type="disruption phenotype">
    <text evidence="3">The toxic effects of racR silencing can be observed in the ydaS deletion mutant (where YdaT levels are elevated), but the ydaS-ydaT double deletion mutant shows complete attenuation of the toxic effects of racR silencing.</text>
</comment>
<comment type="miscellaneous">
    <text evidence="2 3">Encoded in the Rac prophage region.</text>
</comment>
<comment type="miscellaneous">
    <text evidence="1 2 3 4 5">The ydaST locus was predicted to encode a toxin/antitoxin (TA) pair in a genome-wide prediction of TA pairs, however it was shown in subsequent studies that it does not form a toxin/antitoxin pair (PubMed:19943910, PubMed:29205228, PubMed:29205229). Whether or not the YdaST-RacR module forms a toxin-repressor combination or an atypical toxin-antitoxin system, or whether they are actually essential regulatory components of the prophage genome, has been debated (PubMed:29695625, PubMed:29695627).</text>
</comment>
<dbReference type="EMBL" id="U00096">
    <property type="protein sequence ID" value="AAC74439.1"/>
    <property type="molecule type" value="Genomic_DNA"/>
</dbReference>
<dbReference type="EMBL" id="AP009048">
    <property type="protein sequence ID" value="BAE76412.1"/>
    <property type="molecule type" value="Genomic_DNA"/>
</dbReference>
<dbReference type="PIR" id="H64885">
    <property type="entry name" value="H64885"/>
</dbReference>
<dbReference type="RefSeq" id="NP_415875.1">
    <property type="nucleotide sequence ID" value="NC_000913.3"/>
</dbReference>
<dbReference type="RefSeq" id="WP_000712069.1">
    <property type="nucleotide sequence ID" value="NZ_JACEFS010000049.1"/>
</dbReference>
<dbReference type="SMR" id="P76063"/>
<dbReference type="BioGRID" id="4263285">
    <property type="interactions" value="133"/>
</dbReference>
<dbReference type="FunCoup" id="P76063">
    <property type="interactions" value="31"/>
</dbReference>
<dbReference type="IntAct" id="P76063">
    <property type="interactions" value="2"/>
</dbReference>
<dbReference type="STRING" id="511145.b1357"/>
<dbReference type="PaxDb" id="511145-b1357"/>
<dbReference type="EnsemblBacteria" id="AAC74439">
    <property type="protein sequence ID" value="AAC74439"/>
    <property type="gene ID" value="b1357"/>
</dbReference>
<dbReference type="GeneID" id="86946547"/>
<dbReference type="GeneID" id="945923"/>
<dbReference type="KEGG" id="ecj:JW1352"/>
<dbReference type="KEGG" id="eco:b1357"/>
<dbReference type="KEGG" id="ecoc:C3026_07940"/>
<dbReference type="PATRIC" id="fig|1411691.4.peg.919"/>
<dbReference type="EchoBASE" id="EB3144"/>
<dbReference type="eggNOG" id="COG4197">
    <property type="taxonomic scope" value="Bacteria"/>
</dbReference>
<dbReference type="HOGENOM" id="CLU_173998_0_0_6"/>
<dbReference type="InParanoid" id="P76063"/>
<dbReference type="OMA" id="MSAMARH"/>
<dbReference type="OrthoDB" id="6446140at2"/>
<dbReference type="BioCyc" id="EcoCyc:G6681-MONOMER"/>
<dbReference type="PRO" id="PR:P76063"/>
<dbReference type="Proteomes" id="UP000000625">
    <property type="component" value="Chromosome"/>
</dbReference>
<dbReference type="GO" id="GO:0003677">
    <property type="term" value="F:DNA binding"/>
    <property type="evidence" value="ECO:0007669"/>
    <property type="project" value="InterPro"/>
</dbReference>
<dbReference type="CDD" id="cd00093">
    <property type="entry name" value="HTH_XRE"/>
    <property type="match status" value="1"/>
</dbReference>
<dbReference type="DisProt" id="DP03032"/>
<dbReference type="Gene3D" id="1.10.260.40">
    <property type="entry name" value="lambda repressor-like DNA-binding domains"/>
    <property type="match status" value="1"/>
</dbReference>
<dbReference type="InterPro" id="IPR001387">
    <property type="entry name" value="Cro/C1-type_HTH"/>
</dbReference>
<dbReference type="InterPro" id="IPR010982">
    <property type="entry name" value="Lambda_DNA-bd_dom_sf"/>
</dbReference>
<dbReference type="InterPro" id="IPR031856">
    <property type="entry name" value="YdaS_toxin-like"/>
</dbReference>
<dbReference type="Pfam" id="PF15943">
    <property type="entry name" value="YdaS_toxin"/>
    <property type="match status" value="1"/>
</dbReference>
<dbReference type="SUPFAM" id="SSF47413">
    <property type="entry name" value="lambda repressor-like DNA-binding domains"/>
    <property type="match status" value="1"/>
</dbReference>
<name>YDAS_ECOLI</name>